<proteinExistence type="inferred from homology"/>
<keyword id="KW-0010">Activator</keyword>
<keyword id="KW-0238">DNA-binding</keyword>
<keyword id="KW-0244">Early protein</keyword>
<keyword id="KW-1035">Host cytoplasm</keyword>
<keyword id="KW-1048">Host nucleus</keyword>
<keyword id="KW-0945">Host-virus interaction</keyword>
<keyword id="KW-1090">Inhibition of host innate immune response by virus</keyword>
<keyword id="KW-0479">Metal-binding</keyword>
<keyword id="KW-1119">Modulation of host cell apoptosis by virus</keyword>
<keyword id="KW-0804">Transcription</keyword>
<keyword id="KW-0805">Transcription regulation</keyword>
<keyword id="KW-0899">Viral immunoevasion</keyword>
<keyword id="KW-0862">Zinc</keyword>
<keyword id="KW-0863">Zinc-finger</keyword>
<sequence length="141" mass="16591">MELPKPQTVQQLSDKLTVPVEDLLLPCRFCNSFLTYIELREFDYKNLQLIWTQEDFVFACCSSCAYASAQYECQQFYELTVFGREIEQVEQQTIGLIVIRCQYCLKCLDLIEKLDICCSHQAFHKVRGNWKGRCRHCKAIE</sequence>
<reference key="1">
    <citation type="submission" date="1995-10" db="EMBL/GenBank/DDBJ databases">
        <authorList>
            <person name="Delius H."/>
        </authorList>
    </citation>
    <scope>NUCLEOTIDE SEQUENCE [GENOMIC DNA]</scope>
</reference>
<organismHost>
    <name type="scientific">Homo sapiens</name>
    <name type="common">Human</name>
    <dbReference type="NCBI Taxonomy" id="9606"/>
</organismHost>
<dbReference type="EMBL" id="U31787">
    <property type="protein sequence ID" value="AAA79450.1"/>
    <property type="molecule type" value="Genomic_DNA"/>
</dbReference>
<dbReference type="SMR" id="Q80907"/>
<dbReference type="Proteomes" id="UP000009166">
    <property type="component" value="Genome"/>
</dbReference>
<dbReference type="GO" id="GO:0030430">
    <property type="term" value="C:host cell cytoplasm"/>
    <property type="evidence" value="ECO:0007669"/>
    <property type="project" value="UniProtKB-SubCell"/>
</dbReference>
<dbReference type="GO" id="GO:0042025">
    <property type="term" value="C:host cell nucleus"/>
    <property type="evidence" value="ECO:0007669"/>
    <property type="project" value="UniProtKB-SubCell"/>
</dbReference>
<dbReference type="GO" id="GO:0003677">
    <property type="term" value="F:DNA binding"/>
    <property type="evidence" value="ECO:0007669"/>
    <property type="project" value="UniProtKB-UniRule"/>
</dbReference>
<dbReference type="GO" id="GO:0008270">
    <property type="term" value="F:zinc ion binding"/>
    <property type="evidence" value="ECO:0007669"/>
    <property type="project" value="UniProtKB-KW"/>
</dbReference>
<dbReference type="GO" id="GO:0006351">
    <property type="term" value="P:DNA-templated transcription"/>
    <property type="evidence" value="ECO:0007669"/>
    <property type="project" value="UniProtKB-UniRule"/>
</dbReference>
<dbReference type="GO" id="GO:0006355">
    <property type="term" value="P:regulation of DNA-templated transcription"/>
    <property type="evidence" value="ECO:0007669"/>
    <property type="project" value="UniProtKB-UniRule"/>
</dbReference>
<dbReference type="GO" id="GO:0052150">
    <property type="term" value="P:symbiont-mediated perturbation of host apoptosis"/>
    <property type="evidence" value="ECO:0007669"/>
    <property type="project" value="UniProtKB-KW"/>
</dbReference>
<dbReference type="GO" id="GO:0039648">
    <property type="term" value="P:symbiont-mediated perturbation of host ubiquitin-like protein modification"/>
    <property type="evidence" value="ECO:0007669"/>
    <property type="project" value="UniProtKB-UniRule"/>
</dbReference>
<dbReference type="GO" id="GO:0052170">
    <property type="term" value="P:symbiont-mediated suppression of host innate immune response"/>
    <property type="evidence" value="ECO:0007669"/>
    <property type="project" value="UniProtKB-KW"/>
</dbReference>
<dbReference type="GO" id="GO:0039502">
    <property type="term" value="P:symbiont-mediated suppression of host type I interferon-mediated signaling pathway"/>
    <property type="evidence" value="ECO:0007669"/>
    <property type="project" value="UniProtKB-UniRule"/>
</dbReference>
<dbReference type="Gene3D" id="3.30.240.40">
    <property type="entry name" value="E6 early regulatory protein"/>
    <property type="match status" value="2"/>
</dbReference>
<dbReference type="HAMAP" id="MF_04006">
    <property type="entry name" value="HPV_E6"/>
    <property type="match status" value="1"/>
</dbReference>
<dbReference type="InterPro" id="IPR001334">
    <property type="entry name" value="E6"/>
</dbReference>
<dbReference type="InterPro" id="IPR038575">
    <property type="entry name" value="E6_sf"/>
</dbReference>
<dbReference type="Pfam" id="PF00518">
    <property type="entry name" value="E6"/>
    <property type="match status" value="1"/>
</dbReference>
<dbReference type="SUPFAM" id="SSF161229">
    <property type="entry name" value="E6 C-terminal domain-like"/>
    <property type="match status" value="2"/>
</dbReference>
<gene>
    <name evidence="1" type="primary">E6</name>
</gene>
<evidence type="ECO:0000255" key="1">
    <source>
        <dbReference type="HAMAP-Rule" id="MF_04006"/>
    </source>
</evidence>
<evidence type="ECO:0000305" key="2"/>
<accession>Q80907</accession>
<organism>
    <name type="scientific">Human papillomavirus 38</name>
    <dbReference type="NCBI Taxonomy" id="37959"/>
    <lineage>
        <taxon>Viruses</taxon>
        <taxon>Monodnaviria</taxon>
        <taxon>Shotokuvirae</taxon>
        <taxon>Cossaviricota</taxon>
        <taxon>Papovaviricetes</taxon>
        <taxon>Zurhausenvirales</taxon>
        <taxon>Papillomaviridae</taxon>
        <taxon>Firstpapillomavirinae</taxon>
        <taxon>Betapapillomavirus</taxon>
        <taxon>Betapapillomavirus 2</taxon>
    </lineage>
</organism>
<feature type="chain" id="PRO_0000133357" description="Protein E6">
    <location>
        <begin position="1"/>
        <end position="141"/>
    </location>
</feature>
<feature type="zinc finger region" evidence="1">
    <location>
        <begin position="27"/>
        <end position="64"/>
    </location>
</feature>
<feature type="zinc finger region" evidence="1">
    <location>
        <begin position="101"/>
        <end position="137"/>
    </location>
</feature>
<name>VE6_HPV38</name>
<comment type="function">
    <text evidence="1">Plays a major role in the induction and maintenance of cellular transformation. E6 associates with host UBE3A/E6-AP ubiquitin-protein ligase and modulates its activity. Protects host keratinocytes from apoptosis by mediating the degradation of host BAK1. May also inhibit host immune response.</text>
</comment>
<comment type="subunit">
    <text evidence="1">Forms homodimers. Interacts with ubiquitin-protein ligase UBE3A/E6-AP; this interaction stimulates UBE3A ubiquitin activity. Interacts with host BAK1.</text>
</comment>
<comment type="subcellular location">
    <subcellularLocation>
        <location evidence="1">Host cytoplasm</location>
    </subcellularLocation>
    <subcellularLocation>
        <location evidence="1">Host nucleus</location>
    </subcellularLocation>
</comment>
<comment type="similarity">
    <text evidence="1 2">Belongs to the papillomaviridae E6 protein family.</text>
</comment>
<protein>
    <recommendedName>
        <fullName evidence="1">Protein E6</fullName>
    </recommendedName>
</protein>